<reference key="1">
    <citation type="journal article" date="2006" name="Proc. Natl. Acad. Sci. U.S.A.">
        <title>Multireplicon genome architecture of Lactobacillus salivarius.</title>
        <authorList>
            <person name="Claesson M.J."/>
            <person name="Li Y."/>
            <person name="Leahy S."/>
            <person name="Canchaya C."/>
            <person name="van Pijkeren J.P."/>
            <person name="Cerdeno-Tarraga A.M."/>
            <person name="Parkhill J."/>
            <person name="Flynn S."/>
            <person name="O'Sullivan G.C."/>
            <person name="Collins J.K."/>
            <person name="Higgins D."/>
            <person name="Shanahan F."/>
            <person name="Fitzgerald G.F."/>
            <person name="van Sinderen D."/>
            <person name="O'Toole P.W."/>
        </authorList>
    </citation>
    <scope>NUCLEOTIDE SEQUENCE [LARGE SCALE GENOMIC DNA]</scope>
    <source>
        <strain>UCC118</strain>
    </source>
</reference>
<protein>
    <recommendedName>
        <fullName evidence="1">Spermidine/putrescine import ATP-binding protein PotA</fullName>
        <ecNumber evidence="1">7.6.2.11</ecNumber>
    </recommendedName>
</protein>
<organism>
    <name type="scientific">Ligilactobacillus salivarius (strain UCC118)</name>
    <name type="common">Lactobacillus salivarius</name>
    <dbReference type="NCBI Taxonomy" id="362948"/>
    <lineage>
        <taxon>Bacteria</taxon>
        <taxon>Bacillati</taxon>
        <taxon>Bacillota</taxon>
        <taxon>Bacilli</taxon>
        <taxon>Lactobacillales</taxon>
        <taxon>Lactobacillaceae</taxon>
        <taxon>Ligilactobacillus</taxon>
    </lineage>
</organism>
<name>POTA_LIGS1</name>
<dbReference type="EC" id="7.6.2.11" evidence="1"/>
<dbReference type="EMBL" id="CP000233">
    <property type="protein sequence ID" value="ABD98930.1"/>
    <property type="molecule type" value="Genomic_DNA"/>
</dbReference>
<dbReference type="RefSeq" id="WP_003705023.1">
    <property type="nucleotide sequence ID" value="NC_007929.1"/>
</dbReference>
<dbReference type="RefSeq" id="YP_535013.1">
    <property type="nucleotide sequence ID" value="NC_007929.1"/>
</dbReference>
<dbReference type="SMR" id="Q1WVI7"/>
<dbReference type="STRING" id="362948.LSL_0113"/>
<dbReference type="KEGG" id="lsl:LSL_0113"/>
<dbReference type="PATRIC" id="fig|362948.14.peg.188"/>
<dbReference type="HOGENOM" id="CLU_000604_1_1_9"/>
<dbReference type="OrthoDB" id="9790614at2"/>
<dbReference type="Proteomes" id="UP000006559">
    <property type="component" value="Chromosome"/>
</dbReference>
<dbReference type="GO" id="GO:0043190">
    <property type="term" value="C:ATP-binding cassette (ABC) transporter complex"/>
    <property type="evidence" value="ECO:0007669"/>
    <property type="project" value="InterPro"/>
</dbReference>
<dbReference type="GO" id="GO:0015594">
    <property type="term" value="F:ABC-type putrescine transporter activity"/>
    <property type="evidence" value="ECO:0007669"/>
    <property type="project" value="InterPro"/>
</dbReference>
<dbReference type="GO" id="GO:0005524">
    <property type="term" value="F:ATP binding"/>
    <property type="evidence" value="ECO:0007669"/>
    <property type="project" value="UniProtKB-KW"/>
</dbReference>
<dbReference type="GO" id="GO:0016887">
    <property type="term" value="F:ATP hydrolysis activity"/>
    <property type="evidence" value="ECO:0007669"/>
    <property type="project" value="InterPro"/>
</dbReference>
<dbReference type="CDD" id="cd03300">
    <property type="entry name" value="ABC_PotA_N"/>
    <property type="match status" value="1"/>
</dbReference>
<dbReference type="FunFam" id="3.40.50.300:FF:000042">
    <property type="entry name" value="Maltose/maltodextrin ABC transporter, ATP-binding protein"/>
    <property type="match status" value="1"/>
</dbReference>
<dbReference type="Gene3D" id="2.40.50.100">
    <property type="match status" value="1"/>
</dbReference>
<dbReference type="Gene3D" id="3.40.50.300">
    <property type="entry name" value="P-loop containing nucleotide triphosphate hydrolases"/>
    <property type="match status" value="1"/>
</dbReference>
<dbReference type="InterPro" id="IPR003593">
    <property type="entry name" value="AAA+_ATPase"/>
</dbReference>
<dbReference type="InterPro" id="IPR050093">
    <property type="entry name" value="ABC_SmlMolc_Importer"/>
</dbReference>
<dbReference type="InterPro" id="IPR003439">
    <property type="entry name" value="ABC_transporter-like_ATP-bd"/>
</dbReference>
<dbReference type="InterPro" id="IPR017871">
    <property type="entry name" value="ABC_transporter-like_CS"/>
</dbReference>
<dbReference type="InterPro" id="IPR008995">
    <property type="entry name" value="Mo/tungstate-bd_C_term_dom"/>
</dbReference>
<dbReference type="InterPro" id="IPR027417">
    <property type="entry name" value="P-loop_NTPase"/>
</dbReference>
<dbReference type="InterPro" id="IPR017879">
    <property type="entry name" value="PotA_ATP-bd"/>
</dbReference>
<dbReference type="InterPro" id="IPR013611">
    <property type="entry name" value="Transp-assoc_OB_typ2"/>
</dbReference>
<dbReference type="PANTHER" id="PTHR42781">
    <property type="entry name" value="SPERMIDINE/PUTRESCINE IMPORT ATP-BINDING PROTEIN POTA"/>
    <property type="match status" value="1"/>
</dbReference>
<dbReference type="PANTHER" id="PTHR42781:SF4">
    <property type="entry name" value="SPERMIDINE_PUTRESCINE IMPORT ATP-BINDING PROTEIN POTA"/>
    <property type="match status" value="1"/>
</dbReference>
<dbReference type="Pfam" id="PF00005">
    <property type="entry name" value="ABC_tran"/>
    <property type="match status" value="1"/>
</dbReference>
<dbReference type="Pfam" id="PF08402">
    <property type="entry name" value="TOBE_2"/>
    <property type="match status" value="1"/>
</dbReference>
<dbReference type="SMART" id="SM00382">
    <property type="entry name" value="AAA"/>
    <property type="match status" value="1"/>
</dbReference>
<dbReference type="SUPFAM" id="SSF50331">
    <property type="entry name" value="MOP-like"/>
    <property type="match status" value="1"/>
</dbReference>
<dbReference type="SUPFAM" id="SSF52540">
    <property type="entry name" value="P-loop containing nucleoside triphosphate hydrolases"/>
    <property type="match status" value="1"/>
</dbReference>
<dbReference type="PROSITE" id="PS00211">
    <property type="entry name" value="ABC_TRANSPORTER_1"/>
    <property type="match status" value="1"/>
</dbReference>
<dbReference type="PROSITE" id="PS50893">
    <property type="entry name" value="ABC_TRANSPORTER_2"/>
    <property type="match status" value="1"/>
</dbReference>
<dbReference type="PROSITE" id="PS51305">
    <property type="entry name" value="POTA"/>
    <property type="match status" value="1"/>
</dbReference>
<sequence length="362" mass="40687">MKQPLISFKHVVKSYDDDVQVLKDVSFDIEEGKFYTLLGPSGCGKTTILNIIAGLSDATSGDVYFDGKRINDVPANKRQVNTVFQDYALFQHLNVYDNIAFGLKIKKVPADKIKEKVTEALRMVRLDGYEDRAISEMSGGQRQRVAIARAIVLDPKVLLLDEPLSALDQKLRAEMQYELRSLQKKLGITFIFITHDQEEALAMSDEIFVLNNGNIVQSGTPVDIYDEPINHYVADFIGESNIVNGIMIKDELVEFAGQQFPCVDGGMKPNEPVEVVIRPEDLVLTSPEKGQLKVKVDTQLFRGVHYEIRCTDALGNKWLVHSTKRAVPGENIGLSFGPEDIHVMRFNESEEDFDARLDSYND</sequence>
<comment type="function">
    <text evidence="1">Part of the ABC transporter complex PotABCD involved in spermidine/putrescine import. Responsible for energy coupling to the transport system.</text>
</comment>
<comment type="catalytic activity">
    <reaction evidence="1">
        <text>ATP + H2O + polyamine-[polyamine-binding protein]Side 1 = ADP + phosphate + polyamineSide 2 + [polyamine-binding protein]Side 1.</text>
        <dbReference type="EC" id="7.6.2.11"/>
    </reaction>
</comment>
<comment type="subunit">
    <text evidence="1">The complex is composed of two ATP-binding proteins (PotA), two transmembrane proteins (PotB and PotC) and a solute-binding protein (PotD).</text>
</comment>
<comment type="subcellular location">
    <subcellularLocation>
        <location evidence="1">Cell membrane</location>
        <topology evidence="1">Peripheral membrane protein</topology>
    </subcellularLocation>
</comment>
<comment type="similarity">
    <text evidence="1">Belongs to the ABC transporter superfamily. Spermidine/putrescine importer (TC 3.A.1.11.1) family.</text>
</comment>
<accession>Q1WVI7</accession>
<evidence type="ECO:0000255" key="1">
    <source>
        <dbReference type="HAMAP-Rule" id="MF_01726"/>
    </source>
</evidence>
<gene>
    <name evidence="1" type="primary">potA</name>
    <name type="ordered locus">LSL_0113</name>
</gene>
<keyword id="KW-0067">ATP-binding</keyword>
<keyword id="KW-1003">Cell membrane</keyword>
<keyword id="KW-0472">Membrane</keyword>
<keyword id="KW-0547">Nucleotide-binding</keyword>
<keyword id="KW-1185">Reference proteome</keyword>
<keyword id="KW-1278">Translocase</keyword>
<keyword id="KW-0813">Transport</keyword>
<proteinExistence type="inferred from homology"/>
<feature type="chain" id="PRO_0000286235" description="Spermidine/putrescine import ATP-binding protein PotA">
    <location>
        <begin position="1"/>
        <end position="362"/>
    </location>
</feature>
<feature type="domain" description="ABC transporter" evidence="1">
    <location>
        <begin position="6"/>
        <end position="237"/>
    </location>
</feature>
<feature type="binding site" evidence="1">
    <location>
        <begin position="39"/>
        <end position="46"/>
    </location>
    <ligand>
        <name>ATP</name>
        <dbReference type="ChEBI" id="CHEBI:30616"/>
    </ligand>
</feature>